<name>ATPF2_RHIME</name>
<comment type="function">
    <text evidence="1">F(1)F(0) ATP synthase produces ATP from ADP in the presence of a proton or sodium gradient. F-type ATPases consist of two structural domains, F(1) containing the extramembraneous catalytic core and F(0) containing the membrane proton channel, linked together by a central stalk and a peripheral stalk. During catalysis, ATP synthesis in the catalytic domain of F(1) is coupled via a rotary mechanism of the central stalk subunits to proton translocation (By similarity).</text>
</comment>
<comment type="function">
    <text evidence="1">Component of the F(0) channel, it forms part of the peripheral stalk, linking F(1) to F(0). The b'-subunit is a diverged and duplicated form of b found in plants and photosynthetic bacteria (By similarity).</text>
</comment>
<comment type="subunit">
    <text evidence="1">F-type ATPases have 2 components, F(1) - the catalytic core - and F(0) - the membrane proton channel. F(1) has five subunits: alpha(3), beta(3), gamma(1), delta(1), epsilon(1). F(0) has three main subunits: a(1), b(2) and c(10-14). The alpha and beta chains form an alternating ring which encloses part of the gamma chain. F(1) is attached to F(0) by a central stalk formed by the gamma and epsilon chains, while a peripheral stalk is formed by the delta and b chains (By similarity).</text>
</comment>
<comment type="subcellular location">
    <subcellularLocation>
        <location evidence="1">Cell inner membrane</location>
        <topology evidence="1">Single-pass membrane protein</topology>
    </subcellularLocation>
</comment>
<comment type="similarity">
    <text evidence="4">Belongs to the ATPase B chain family.</text>
</comment>
<organism>
    <name type="scientific">Rhizobium meliloti (strain 1021)</name>
    <name type="common">Ensifer meliloti</name>
    <name type="synonym">Sinorhizobium meliloti</name>
    <dbReference type="NCBI Taxonomy" id="266834"/>
    <lineage>
        <taxon>Bacteria</taxon>
        <taxon>Pseudomonadati</taxon>
        <taxon>Pseudomonadota</taxon>
        <taxon>Alphaproteobacteria</taxon>
        <taxon>Hyphomicrobiales</taxon>
        <taxon>Rhizobiaceae</taxon>
        <taxon>Sinorhizobium/Ensifer group</taxon>
        <taxon>Sinorhizobium</taxon>
    </lineage>
</organism>
<feature type="chain" id="PRO_0000369035" description="ATP synthase subunit b 2">
    <location>
        <begin position="1"/>
        <end position="204"/>
    </location>
</feature>
<feature type="transmembrane region" description="Helical" evidence="2">
    <location>
        <begin position="56"/>
        <end position="76"/>
    </location>
</feature>
<feature type="region of interest" description="Disordered" evidence="3">
    <location>
        <begin position="8"/>
        <end position="28"/>
    </location>
</feature>
<protein>
    <recommendedName>
        <fullName>ATP synthase subunit b 2</fullName>
    </recommendedName>
    <alternativeName>
        <fullName>ATP synthase F(0) sector subunit b 2</fullName>
    </alternativeName>
    <alternativeName>
        <fullName>ATPase subunit I 2</fullName>
    </alternativeName>
    <alternativeName>
        <fullName>F-type ATPase subunit b 2</fullName>
        <shortName>F-ATPase subunit b 2</shortName>
    </alternativeName>
</protein>
<proteinExistence type="inferred from homology"/>
<keyword id="KW-0066">ATP synthesis</keyword>
<keyword id="KW-0997">Cell inner membrane</keyword>
<keyword id="KW-1003">Cell membrane</keyword>
<keyword id="KW-0138">CF(0)</keyword>
<keyword id="KW-0375">Hydrogen ion transport</keyword>
<keyword id="KW-0406">Ion transport</keyword>
<keyword id="KW-0472">Membrane</keyword>
<keyword id="KW-1185">Reference proteome</keyword>
<keyword id="KW-0812">Transmembrane</keyword>
<keyword id="KW-1133">Transmembrane helix</keyword>
<keyword id="KW-0813">Transport</keyword>
<accession>Q92RM6</accession>
<sequence>MFVTAAYAQSSTTEGAEAHDAAAAGEVHTETGVAHEADHGAGVFPPFDTTHFASQLLWLAITFGLFYLLMSKVIIPRIGGILETRHDRIAQDLDEASRLKGEADAAIAAYEQELAGARAKGHSIADTAREAAKAKAKADRDGVEAGLAKKIAAAEARIADIKSKALADVGAIAEETATAVVKQLIGGTVTKAEIAAAFKASAGN</sequence>
<gene>
    <name type="primary">atpF2</name>
    <name type="synonym">atpG</name>
    <name type="ordered locus">R00837</name>
    <name type="ORF">SMc00869</name>
</gene>
<dbReference type="EMBL" id="AL591688">
    <property type="protein sequence ID" value="CAC45409.1"/>
    <property type="molecule type" value="Genomic_DNA"/>
</dbReference>
<dbReference type="RefSeq" id="NP_384943.1">
    <property type="nucleotide sequence ID" value="NC_003047.1"/>
</dbReference>
<dbReference type="RefSeq" id="WP_010968855.1">
    <property type="nucleotide sequence ID" value="NC_003047.1"/>
</dbReference>
<dbReference type="SMR" id="Q92RM6"/>
<dbReference type="EnsemblBacteria" id="CAC45409">
    <property type="protein sequence ID" value="CAC45409"/>
    <property type="gene ID" value="SMc00869"/>
</dbReference>
<dbReference type="KEGG" id="sme:SMc00869"/>
<dbReference type="PATRIC" id="fig|266834.11.peg.2229"/>
<dbReference type="eggNOG" id="COG0711">
    <property type="taxonomic scope" value="Bacteria"/>
</dbReference>
<dbReference type="HOGENOM" id="CLU_079215_1_2_5"/>
<dbReference type="OrthoDB" id="9805716at2"/>
<dbReference type="Proteomes" id="UP000001976">
    <property type="component" value="Chromosome"/>
</dbReference>
<dbReference type="GO" id="GO:0005886">
    <property type="term" value="C:plasma membrane"/>
    <property type="evidence" value="ECO:0007669"/>
    <property type="project" value="UniProtKB-SubCell"/>
</dbReference>
<dbReference type="GO" id="GO:0045259">
    <property type="term" value="C:proton-transporting ATP synthase complex"/>
    <property type="evidence" value="ECO:0007669"/>
    <property type="project" value="UniProtKB-KW"/>
</dbReference>
<dbReference type="GO" id="GO:0046933">
    <property type="term" value="F:proton-transporting ATP synthase activity, rotational mechanism"/>
    <property type="evidence" value="ECO:0007669"/>
    <property type="project" value="UniProtKB-UniRule"/>
</dbReference>
<dbReference type="GO" id="GO:0046961">
    <property type="term" value="F:proton-transporting ATPase activity, rotational mechanism"/>
    <property type="evidence" value="ECO:0007669"/>
    <property type="project" value="TreeGrafter"/>
</dbReference>
<dbReference type="CDD" id="cd06503">
    <property type="entry name" value="ATP-synt_Fo_b"/>
    <property type="match status" value="1"/>
</dbReference>
<dbReference type="HAMAP" id="MF_01398">
    <property type="entry name" value="ATP_synth_b_bprime"/>
    <property type="match status" value="1"/>
</dbReference>
<dbReference type="InterPro" id="IPR002146">
    <property type="entry name" value="ATP_synth_b/b'su_bac/chlpt"/>
</dbReference>
<dbReference type="InterPro" id="IPR050059">
    <property type="entry name" value="ATP_synthase_B_chain"/>
</dbReference>
<dbReference type="NCBIfam" id="NF006612">
    <property type="entry name" value="PRK09174.1"/>
    <property type="match status" value="1"/>
</dbReference>
<dbReference type="PANTHER" id="PTHR33445:SF1">
    <property type="entry name" value="ATP SYNTHASE SUBUNIT B"/>
    <property type="match status" value="1"/>
</dbReference>
<dbReference type="PANTHER" id="PTHR33445">
    <property type="entry name" value="ATP SYNTHASE SUBUNIT B', CHLOROPLASTIC"/>
    <property type="match status" value="1"/>
</dbReference>
<dbReference type="Pfam" id="PF00430">
    <property type="entry name" value="ATP-synt_B"/>
    <property type="match status" value="1"/>
</dbReference>
<evidence type="ECO:0000250" key="1"/>
<evidence type="ECO:0000255" key="2"/>
<evidence type="ECO:0000256" key="3">
    <source>
        <dbReference type="SAM" id="MobiDB-lite"/>
    </source>
</evidence>
<evidence type="ECO:0000305" key="4"/>
<reference key="1">
    <citation type="journal article" date="2001" name="Proc. Natl. Acad. Sci. U.S.A.">
        <title>Analysis of the chromosome sequence of the legume symbiont Sinorhizobium meliloti strain 1021.</title>
        <authorList>
            <person name="Capela D."/>
            <person name="Barloy-Hubler F."/>
            <person name="Gouzy J."/>
            <person name="Bothe G."/>
            <person name="Ampe F."/>
            <person name="Batut J."/>
            <person name="Boistard P."/>
            <person name="Becker A."/>
            <person name="Boutry M."/>
            <person name="Cadieu E."/>
            <person name="Dreano S."/>
            <person name="Gloux S."/>
            <person name="Godrie T."/>
            <person name="Goffeau A."/>
            <person name="Kahn D."/>
            <person name="Kiss E."/>
            <person name="Lelaure V."/>
            <person name="Masuy D."/>
            <person name="Pohl T."/>
            <person name="Portetelle D."/>
            <person name="Puehler A."/>
            <person name="Purnelle B."/>
            <person name="Ramsperger U."/>
            <person name="Renard C."/>
            <person name="Thebault P."/>
            <person name="Vandenbol M."/>
            <person name="Weidner S."/>
            <person name="Galibert F."/>
        </authorList>
    </citation>
    <scope>NUCLEOTIDE SEQUENCE [LARGE SCALE GENOMIC DNA]</scope>
    <source>
        <strain>1021</strain>
    </source>
</reference>
<reference key="2">
    <citation type="journal article" date="2001" name="Science">
        <title>The composite genome of the legume symbiont Sinorhizobium meliloti.</title>
        <authorList>
            <person name="Galibert F."/>
            <person name="Finan T.M."/>
            <person name="Long S.R."/>
            <person name="Puehler A."/>
            <person name="Abola P."/>
            <person name="Ampe F."/>
            <person name="Barloy-Hubler F."/>
            <person name="Barnett M.J."/>
            <person name="Becker A."/>
            <person name="Boistard P."/>
            <person name="Bothe G."/>
            <person name="Boutry M."/>
            <person name="Bowser L."/>
            <person name="Buhrmester J."/>
            <person name="Cadieu E."/>
            <person name="Capela D."/>
            <person name="Chain P."/>
            <person name="Cowie A."/>
            <person name="Davis R.W."/>
            <person name="Dreano S."/>
            <person name="Federspiel N.A."/>
            <person name="Fisher R.F."/>
            <person name="Gloux S."/>
            <person name="Godrie T."/>
            <person name="Goffeau A."/>
            <person name="Golding B."/>
            <person name="Gouzy J."/>
            <person name="Gurjal M."/>
            <person name="Hernandez-Lucas I."/>
            <person name="Hong A."/>
            <person name="Huizar L."/>
            <person name="Hyman R.W."/>
            <person name="Jones T."/>
            <person name="Kahn D."/>
            <person name="Kahn M.L."/>
            <person name="Kalman S."/>
            <person name="Keating D.H."/>
            <person name="Kiss E."/>
            <person name="Komp C."/>
            <person name="Lelaure V."/>
            <person name="Masuy D."/>
            <person name="Palm C."/>
            <person name="Peck M.C."/>
            <person name="Pohl T.M."/>
            <person name="Portetelle D."/>
            <person name="Purnelle B."/>
            <person name="Ramsperger U."/>
            <person name="Surzycki R."/>
            <person name="Thebault P."/>
            <person name="Vandenbol M."/>
            <person name="Vorhoelter F.J."/>
            <person name="Weidner S."/>
            <person name="Wells D.H."/>
            <person name="Wong K."/>
            <person name="Yeh K.-C."/>
            <person name="Batut J."/>
        </authorList>
    </citation>
    <scope>NUCLEOTIDE SEQUENCE [LARGE SCALE GENOMIC DNA]</scope>
    <source>
        <strain>1021</strain>
    </source>
</reference>